<keyword id="KW-0964">Secreted</keyword>
<keyword id="KW-0732">Signal</keyword>
<feature type="signal peptide" evidence="2">
    <location>
        <begin position="1"/>
        <end position="18"/>
    </location>
</feature>
<feature type="chain" id="PRO_0000403898" description="Venom protein 37.1">
    <location>
        <begin position="19"/>
        <end position="59"/>
    </location>
</feature>
<sequence length="59" mass="6952">MVSTLMIASVKLRLYCTALIILCNQKNPSEFNVLIHKLIIKWGFMNKNFHFVSVFFIKF</sequence>
<comment type="subcellular location">
    <subcellularLocation>
        <location evidence="1">Secreted</location>
    </subcellularLocation>
</comment>
<comment type="tissue specificity">
    <text evidence="3">Expressed by the venom gland.</text>
</comment>
<comment type="similarity">
    <text evidence="3">Belongs to the non-disulfide-bridged peptide (NDBP) superfamily. Long chain multifunctional peptide (group 2) family.</text>
</comment>
<protein>
    <recommendedName>
        <fullName>Venom protein 37.1</fullName>
    </recommendedName>
</protein>
<dbReference type="EMBL" id="GT028862">
    <property type="status" value="NOT_ANNOTATED_CDS"/>
    <property type="molecule type" value="mRNA"/>
</dbReference>
<dbReference type="SMR" id="P0CJ06"/>
<dbReference type="GO" id="GO:0005576">
    <property type="term" value="C:extracellular region"/>
    <property type="evidence" value="ECO:0007669"/>
    <property type="project" value="UniProtKB-SubCell"/>
</dbReference>
<evidence type="ECO:0000250" key="1"/>
<evidence type="ECO:0000255" key="2"/>
<evidence type="ECO:0000305" key="3"/>
<proteinExistence type="inferred from homology"/>
<name>NDBV_LYCMC</name>
<reference key="1">
    <citation type="journal article" date="2010" name="BMC Genomics">
        <title>Comparative venom gland transcriptome analysis of the scorpion Lychas mucronatus reveals intraspecific toxic gene diversity and new venomous components.</title>
        <authorList>
            <person name="Zhao R."/>
            <person name="Ma Y."/>
            <person name="He Y."/>
            <person name="Di Z."/>
            <person name="Wu Y.-L."/>
            <person name="Cao Z.-J."/>
            <person name="Li W.-X."/>
        </authorList>
    </citation>
    <scope>NUCLEOTIDE SEQUENCE [MRNA]</scope>
    <source>
        <strain>Yunnan</strain>
        <tissue>Venom gland</tissue>
    </source>
</reference>
<organism>
    <name type="scientific">Lychas mucronatus</name>
    <name type="common">Chinese swimming scorpion</name>
    <dbReference type="NCBI Taxonomy" id="172552"/>
    <lineage>
        <taxon>Eukaryota</taxon>
        <taxon>Metazoa</taxon>
        <taxon>Ecdysozoa</taxon>
        <taxon>Arthropoda</taxon>
        <taxon>Chelicerata</taxon>
        <taxon>Arachnida</taxon>
        <taxon>Scorpiones</taxon>
        <taxon>Buthida</taxon>
        <taxon>Buthoidea</taxon>
        <taxon>Buthidae</taxon>
        <taxon>Lychas</taxon>
    </lineage>
</organism>
<accession>P0CJ06</accession>